<dbReference type="EC" id="6.1.1.21" evidence="1"/>
<dbReference type="EMBL" id="CP000560">
    <property type="protein sequence ID" value="ABS74827.1"/>
    <property type="molecule type" value="Genomic_DNA"/>
</dbReference>
<dbReference type="RefSeq" id="WP_012118082.1">
    <property type="nucleotide sequence ID" value="NC_009725.2"/>
</dbReference>
<dbReference type="SMR" id="A7Z751"/>
<dbReference type="GeneID" id="93081609"/>
<dbReference type="KEGG" id="bay:RBAM_024670"/>
<dbReference type="HOGENOM" id="CLU_025113_1_1_9"/>
<dbReference type="Proteomes" id="UP000001120">
    <property type="component" value="Chromosome"/>
</dbReference>
<dbReference type="GO" id="GO:0005737">
    <property type="term" value="C:cytoplasm"/>
    <property type="evidence" value="ECO:0007669"/>
    <property type="project" value="UniProtKB-SubCell"/>
</dbReference>
<dbReference type="GO" id="GO:0005524">
    <property type="term" value="F:ATP binding"/>
    <property type="evidence" value="ECO:0007669"/>
    <property type="project" value="UniProtKB-UniRule"/>
</dbReference>
<dbReference type="GO" id="GO:0140096">
    <property type="term" value="F:catalytic activity, acting on a protein"/>
    <property type="evidence" value="ECO:0007669"/>
    <property type="project" value="UniProtKB-ARBA"/>
</dbReference>
<dbReference type="GO" id="GO:0004821">
    <property type="term" value="F:histidine-tRNA ligase activity"/>
    <property type="evidence" value="ECO:0007669"/>
    <property type="project" value="UniProtKB-UniRule"/>
</dbReference>
<dbReference type="GO" id="GO:0016740">
    <property type="term" value="F:transferase activity"/>
    <property type="evidence" value="ECO:0007669"/>
    <property type="project" value="UniProtKB-ARBA"/>
</dbReference>
<dbReference type="GO" id="GO:0006427">
    <property type="term" value="P:histidyl-tRNA aminoacylation"/>
    <property type="evidence" value="ECO:0007669"/>
    <property type="project" value="UniProtKB-UniRule"/>
</dbReference>
<dbReference type="CDD" id="cd00773">
    <property type="entry name" value="HisRS-like_core"/>
    <property type="match status" value="1"/>
</dbReference>
<dbReference type="CDD" id="cd00859">
    <property type="entry name" value="HisRS_anticodon"/>
    <property type="match status" value="1"/>
</dbReference>
<dbReference type="FunFam" id="3.30.930.10:FF:000005">
    <property type="entry name" value="Histidine--tRNA ligase"/>
    <property type="match status" value="1"/>
</dbReference>
<dbReference type="FunFam" id="3.40.50.800:FF:000013">
    <property type="entry name" value="Histidine--tRNA ligase"/>
    <property type="match status" value="1"/>
</dbReference>
<dbReference type="Gene3D" id="3.40.50.800">
    <property type="entry name" value="Anticodon-binding domain"/>
    <property type="match status" value="1"/>
</dbReference>
<dbReference type="Gene3D" id="3.30.930.10">
    <property type="entry name" value="Bira Bifunctional Protein, Domain 2"/>
    <property type="match status" value="1"/>
</dbReference>
<dbReference type="HAMAP" id="MF_00127">
    <property type="entry name" value="His_tRNA_synth"/>
    <property type="match status" value="1"/>
</dbReference>
<dbReference type="InterPro" id="IPR006195">
    <property type="entry name" value="aa-tRNA-synth_II"/>
</dbReference>
<dbReference type="InterPro" id="IPR045864">
    <property type="entry name" value="aa-tRNA-synth_II/BPL/LPL"/>
</dbReference>
<dbReference type="InterPro" id="IPR004154">
    <property type="entry name" value="Anticodon-bd"/>
</dbReference>
<dbReference type="InterPro" id="IPR036621">
    <property type="entry name" value="Anticodon-bd_dom_sf"/>
</dbReference>
<dbReference type="InterPro" id="IPR015807">
    <property type="entry name" value="His-tRNA-ligase"/>
</dbReference>
<dbReference type="InterPro" id="IPR041715">
    <property type="entry name" value="HisRS-like_core"/>
</dbReference>
<dbReference type="InterPro" id="IPR004516">
    <property type="entry name" value="HisRS/HisZ"/>
</dbReference>
<dbReference type="InterPro" id="IPR033656">
    <property type="entry name" value="HisRS_anticodon"/>
</dbReference>
<dbReference type="NCBIfam" id="TIGR00442">
    <property type="entry name" value="hisS"/>
    <property type="match status" value="1"/>
</dbReference>
<dbReference type="PANTHER" id="PTHR43707:SF1">
    <property type="entry name" value="HISTIDINE--TRNA LIGASE, MITOCHONDRIAL-RELATED"/>
    <property type="match status" value="1"/>
</dbReference>
<dbReference type="PANTHER" id="PTHR43707">
    <property type="entry name" value="HISTIDYL-TRNA SYNTHETASE"/>
    <property type="match status" value="1"/>
</dbReference>
<dbReference type="Pfam" id="PF03129">
    <property type="entry name" value="HGTP_anticodon"/>
    <property type="match status" value="1"/>
</dbReference>
<dbReference type="Pfam" id="PF13393">
    <property type="entry name" value="tRNA-synt_His"/>
    <property type="match status" value="1"/>
</dbReference>
<dbReference type="PIRSF" id="PIRSF001549">
    <property type="entry name" value="His-tRNA_synth"/>
    <property type="match status" value="1"/>
</dbReference>
<dbReference type="SUPFAM" id="SSF52954">
    <property type="entry name" value="Class II aaRS ABD-related"/>
    <property type="match status" value="1"/>
</dbReference>
<dbReference type="SUPFAM" id="SSF55681">
    <property type="entry name" value="Class II aaRS and biotin synthetases"/>
    <property type="match status" value="1"/>
</dbReference>
<dbReference type="PROSITE" id="PS50862">
    <property type="entry name" value="AA_TRNA_LIGASE_II"/>
    <property type="match status" value="1"/>
</dbReference>
<reference key="1">
    <citation type="journal article" date="2007" name="Nat. Biotechnol.">
        <title>Comparative analysis of the complete genome sequence of the plant growth-promoting bacterium Bacillus amyloliquefaciens FZB42.</title>
        <authorList>
            <person name="Chen X.H."/>
            <person name="Koumoutsi A."/>
            <person name="Scholz R."/>
            <person name="Eisenreich A."/>
            <person name="Schneider K."/>
            <person name="Heinemeyer I."/>
            <person name="Morgenstern B."/>
            <person name="Voss B."/>
            <person name="Hess W.R."/>
            <person name="Reva O."/>
            <person name="Junge H."/>
            <person name="Voigt B."/>
            <person name="Jungblut P.R."/>
            <person name="Vater J."/>
            <person name="Suessmuth R."/>
            <person name="Liesegang H."/>
            <person name="Strittmatter A."/>
            <person name="Gottschalk G."/>
            <person name="Borriss R."/>
        </authorList>
    </citation>
    <scope>NUCLEOTIDE SEQUENCE [LARGE SCALE GENOMIC DNA]</scope>
    <source>
        <strain>DSM 23117 / BGSC 10A6 / LMG 26770 / FZB42</strain>
    </source>
</reference>
<keyword id="KW-0030">Aminoacyl-tRNA synthetase</keyword>
<keyword id="KW-0067">ATP-binding</keyword>
<keyword id="KW-0963">Cytoplasm</keyword>
<keyword id="KW-0436">Ligase</keyword>
<keyword id="KW-0547">Nucleotide-binding</keyword>
<keyword id="KW-0648">Protein biosynthesis</keyword>
<accession>A7Z751</accession>
<protein>
    <recommendedName>
        <fullName evidence="1">Histidine--tRNA ligase</fullName>
        <ecNumber evidence="1">6.1.1.21</ecNumber>
    </recommendedName>
    <alternativeName>
        <fullName evidence="1">Histidyl-tRNA synthetase</fullName>
        <shortName evidence="1">HisRS</shortName>
    </alternativeName>
</protein>
<evidence type="ECO:0000255" key="1">
    <source>
        <dbReference type="HAMAP-Rule" id="MF_00127"/>
    </source>
</evidence>
<sequence>MAYHIPRGTQDILPGESDRWQFVEQIMRETCRTYQYKEIRTPIFEHTELFARGVGESTDIVQKEMYTFEDRKGRSLTLRPEGTAAAVRAFNENKLFANPVQPTKLYYVGPMFRYERPQTGRFRQFYQFGIEAIGSKDPAVDAEVIALAMSIYRKAGLKHVKLVLNSLGDQDSRKSYREALVKHFEPRIGEFCSDCQSRLHTNPLRILDCKKDREHELMKTAPSILDYLNEESAAYFEKVKQYLNDLGIPFEIDPNLVRGLDYYNHTAFEIMSNAEGFGAITTLAGGGRYDGLVEQIGGPEAPGIGFAMSIERLLAAIDAEKTELPVNQGIDCYIVTLGEKAKDYSVSLVYKLREAGISSEIDYENKKMKGQFKTADRLGARFIAILGEDELAQNKINVKDAETGEQREVVLDELIQVLKADQKQ</sequence>
<organism>
    <name type="scientific">Bacillus velezensis (strain DSM 23117 / BGSC 10A6 / LMG 26770 / FZB42)</name>
    <name type="common">Bacillus amyloliquefaciens subsp. plantarum</name>
    <dbReference type="NCBI Taxonomy" id="326423"/>
    <lineage>
        <taxon>Bacteria</taxon>
        <taxon>Bacillati</taxon>
        <taxon>Bacillota</taxon>
        <taxon>Bacilli</taxon>
        <taxon>Bacillales</taxon>
        <taxon>Bacillaceae</taxon>
        <taxon>Bacillus</taxon>
        <taxon>Bacillus amyloliquefaciens group</taxon>
    </lineage>
</organism>
<comment type="catalytic activity">
    <reaction evidence="1">
        <text>tRNA(His) + L-histidine + ATP = L-histidyl-tRNA(His) + AMP + diphosphate + H(+)</text>
        <dbReference type="Rhea" id="RHEA:17313"/>
        <dbReference type="Rhea" id="RHEA-COMP:9665"/>
        <dbReference type="Rhea" id="RHEA-COMP:9689"/>
        <dbReference type="ChEBI" id="CHEBI:15378"/>
        <dbReference type="ChEBI" id="CHEBI:30616"/>
        <dbReference type="ChEBI" id="CHEBI:33019"/>
        <dbReference type="ChEBI" id="CHEBI:57595"/>
        <dbReference type="ChEBI" id="CHEBI:78442"/>
        <dbReference type="ChEBI" id="CHEBI:78527"/>
        <dbReference type="ChEBI" id="CHEBI:456215"/>
        <dbReference type="EC" id="6.1.1.21"/>
    </reaction>
</comment>
<comment type="subunit">
    <text evidence="1">Homodimer.</text>
</comment>
<comment type="subcellular location">
    <subcellularLocation>
        <location evidence="1">Cytoplasm</location>
    </subcellularLocation>
</comment>
<comment type="similarity">
    <text evidence="1">Belongs to the class-II aminoacyl-tRNA synthetase family.</text>
</comment>
<proteinExistence type="inferred from homology"/>
<feature type="chain" id="PRO_1000016312" description="Histidine--tRNA ligase">
    <location>
        <begin position="1"/>
        <end position="424"/>
    </location>
</feature>
<name>SYH_BACVZ</name>
<gene>
    <name evidence="1" type="primary">hisS</name>
    <name type="ordered locus">RBAM_024670</name>
</gene>